<sequence length="72" mass="8150">MLNPPLNQLTSQIKSKYLIATTAAKRAREIDEQPETELLSEYHSFKPVGRALEEIADGKIRPVISSDYYGKE</sequence>
<dbReference type="EC" id="2.7.7.6" evidence="1"/>
<dbReference type="EMBL" id="CP000730">
    <property type="protein sequence ID" value="ABX29163.1"/>
    <property type="molecule type" value="Genomic_DNA"/>
</dbReference>
<dbReference type="RefSeq" id="WP_000933956.1">
    <property type="nucleotide sequence ID" value="NC_010079.1"/>
</dbReference>
<dbReference type="SMR" id="A8Z3P7"/>
<dbReference type="KEGG" id="sax:USA300HOU_1148"/>
<dbReference type="HOGENOM" id="CLU_125406_6_0_9"/>
<dbReference type="GO" id="GO:0000428">
    <property type="term" value="C:DNA-directed RNA polymerase complex"/>
    <property type="evidence" value="ECO:0007669"/>
    <property type="project" value="UniProtKB-KW"/>
</dbReference>
<dbReference type="GO" id="GO:0003677">
    <property type="term" value="F:DNA binding"/>
    <property type="evidence" value="ECO:0007669"/>
    <property type="project" value="UniProtKB-UniRule"/>
</dbReference>
<dbReference type="GO" id="GO:0003899">
    <property type="term" value="F:DNA-directed RNA polymerase activity"/>
    <property type="evidence" value="ECO:0007669"/>
    <property type="project" value="UniProtKB-UniRule"/>
</dbReference>
<dbReference type="GO" id="GO:0006351">
    <property type="term" value="P:DNA-templated transcription"/>
    <property type="evidence" value="ECO:0007669"/>
    <property type="project" value="UniProtKB-UniRule"/>
</dbReference>
<dbReference type="Gene3D" id="3.90.940.10">
    <property type="match status" value="1"/>
</dbReference>
<dbReference type="HAMAP" id="MF_00366">
    <property type="entry name" value="RNApol_bact_RpoZ"/>
    <property type="match status" value="1"/>
</dbReference>
<dbReference type="InterPro" id="IPR003716">
    <property type="entry name" value="DNA-dir_RNA_pol_omega"/>
</dbReference>
<dbReference type="InterPro" id="IPR006110">
    <property type="entry name" value="Pol_omega/Rpo6/RPB6"/>
</dbReference>
<dbReference type="InterPro" id="IPR036161">
    <property type="entry name" value="RPB6/omega-like_sf"/>
</dbReference>
<dbReference type="NCBIfam" id="TIGR00690">
    <property type="entry name" value="rpoZ"/>
    <property type="match status" value="1"/>
</dbReference>
<dbReference type="PANTHER" id="PTHR34476">
    <property type="entry name" value="DNA-DIRECTED RNA POLYMERASE SUBUNIT OMEGA"/>
    <property type="match status" value="1"/>
</dbReference>
<dbReference type="PANTHER" id="PTHR34476:SF1">
    <property type="entry name" value="DNA-DIRECTED RNA POLYMERASE SUBUNIT OMEGA"/>
    <property type="match status" value="1"/>
</dbReference>
<dbReference type="Pfam" id="PF01192">
    <property type="entry name" value="RNA_pol_Rpb6"/>
    <property type="match status" value="1"/>
</dbReference>
<dbReference type="SMART" id="SM01409">
    <property type="entry name" value="RNA_pol_Rpb6"/>
    <property type="match status" value="1"/>
</dbReference>
<dbReference type="SUPFAM" id="SSF63562">
    <property type="entry name" value="RPB6/omega subunit-like"/>
    <property type="match status" value="1"/>
</dbReference>
<proteinExistence type="inferred from homology"/>
<reference key="1">
    <citation type="journal article" date="2007" name="BMC Microbiol.">
        <title>Subtle genetic changes enhance virulence of methicillin resistant and sensitive Staphylococcus aureus.</title>
        <authorList>
            <person name="Highlander S.K."/>
            <person name="Hulten K.G."/>
            <person name="Qin X."/>
            <person name="Jiang H."/>
            <person name="Yerrapragada S."/>
            <person name="Mason E.O. Jr."/>
            <person name="Shang Y."/>
            <person name="Williams T.M."/>
            <person name="Fortunov R.M."/>
            <person name="Liu Y."/>
            <person name="Igboeli O."/>
            <person name="Petrosino J."/>
            <person name="Tirumalai M."/>
            <person name="Uzman A."/>
            <person name="Fox G.E."/>
            <person name="Cardenas A.M."/>
            <person name="Muzny D.M."/>
            <person name="Hemphill L."/>
            <person name="Ding Y."/>
            <person name="Dugan S."/>
            <person name="Blyth P.R."/>
            <person name="Buhay C.J."/>
            <person name="Dinh H.H."/>
            <person name="Hawes A.C."/>
            <person name="Holder M."/>
            <person name="Kovar C.L."/>
            <person name="Lee S.L."/>
            <person name="Liu W."/>
            <person name="Nazareth L.V."/>
            <person name="Wang Q."/>
            <person name="Zhou J."/>
            <person name="Kaplan S.L."/>
            <person name="Weinstock G.M."/>
        </authorList>
    </citation>
    <scope>NUCLEOTIDE SEQUENCE [LARGE SCALE GENOMIC DNA]</scope>
    <source>
        <strain>USA300 / TCH1516</strain>
    </source>
</reference>
<organism>
    <name type="scientific">Staphylococcus aureus (strain USA300 / TCH1516)</name>
    <dbReference type="NCBI Taxonomy" id="451516"/>
    <lineage>
        <taxon>Bacteria</taxon>
        <taxon>Bacillati</taxon>
        <taxon>Bacillota</taxon>
        <taxon>Bacilli</taxon>
        <taxon>Bacillales</taxon>
        <taxon>Staphylococcaceae</taxon>
        <taxon>Staphylococcus</taxon>
    </lineage>
</organism>
<accession>A8Z3P7</accession>
<feature type="chain" id="PRO_1000079652" description="DNA-directed RNA polymerase subunit omega">
    <location>
        <begin position="1"/>
        <end position="72"/>
    </location>
</feature>
<gene>
    <name evidence="1" type="primary">rpoZ</name>
    <name type="ordered locus">USA300HOU_1148</name>
</gene>
<comment type="function">
    <text evidence="1">Promotes RNA polymerase assembly. Latches the N- and C-terminal regions of the beta' subunit thereby facilitating its interaction with the beta and alpha subunits.</text>
</comment>
<comment type="catalytic activity">
    <reaction evidence="1">
        <text>RNA(n) + a ribonucleoside 5'-triphosphate = RNA(n+1) + diphosphate</text>
        <dbReference type="Rhea" id="RHEA:21248"/>
        <dbReference type="Rhea" id="RHEA-COMP:14527"/>
        <dbReference type="Rhea" id="RHEA-COMP:17342"/>
        <dbReference type="ChEBI" id="CHEBI:33019"/>
        <dbReference type="ChEBI" id="CHEBI:61557"/>
        <dbReference type="ChEBI" id="CHEBI:140395"/>
        <dbReference type="EC" id="2.7.7.6"/>
    </reaction>
</comment>
<comment type="subunit">
    <text evidence="1">The RNAP catalytic core consists of 2 alpha, 1 beta, 1 beta' and 1 omega subunit. When a sigma factor is associated with the core the holoenzyme is formed, which can initiate transcription.</text>
</comment>
<comment type="similarity">
    <text evidence="1">Belongs to the RNA polymerase subunit omega family.</text>
</comment>
<evidence type="ECO:0000255" key="1">
    <source>
        <dbReference type="HAMAP-Rule" id="MF_00366"/>
    </source>
</evidence>
<protein>
    <recommendedName>
        <fullName evidence="1">DNA-directed RNA polymerase subunit omega</fullName>
        <shortName evidence="1">RNAP omega subunit</shortName>
        <ecNumber evidence="1">2.7.7.6</ecNumber>
    </recommendedName>
    <alternativeName>
        <fullName evidence="1">RNA polymerase omega subunit</fullName>
    </alternativeName>
    <alternativeName>
        <fullName evidence="1">Transcriptase subunit omega</fullName>
    </alternativeName>
</protein>
<keyword id="KW-0240">DNA-directed RNA polymerase</keyword>
<keyword id="KW-0548">Nucleotidyltransferase</keyword>
<keyword id="KW-0804">Transcription</keyword>
<keyword id="KW-0808">Transferase</keyword>
<name>RPOZ_STAAT</name>